<proteinExistence type="inferred from homology"/>
<sequence length="299" mass="32119">MSEPIDLSQISPALKAEILAEALPYIRRYHGKTVVIKYGGNAMTEERLKQGFARDVILLKLVGINPVIVHGGGPQIDQALKKIGKQGTFIQGMRVTDEETMEVVEWVLGGEVQQDIVTLINHFGGHAVGLTGKDGGLIHARKLMMPDRDNPGEYVDIGQVGEVEAINPAVVKALQDDAFIPVISPIGFGEDGLSYNINADLVAGKLATVLNAEKLVMMTNIPGVMDKEGNLLTDLSAREIDALFEDGTISGGMLPKISSALDAAKSGVKSVHIVDGRIEHSVLLEILTEQPFGTMIRSH</sequence>
<feature type="chain" id="PRO_0000112600" description="Acetylglutamate kinase">
    <location>
        <begin position="1"/>
        <end position="299"/>
    </location>
</feature>
<feature type="binding site" evidence="1">
    <location>
        <begin position="72"/>
        <end position="73"/>
    </location>
    <ligand>
        <name>substrate</name>
    </ligand>
</feature>
<feature type="binding site" evidence="1">
    <location>
        <position position="94"/>
    </location>
    <ligand>
        <name>substrate</name>
    </ligand>
</feature>
<feature type="binding site" evidence="1">
    <location>
        <position position="196"/>
    </location>
    <ligand>
        <name>substrate</name>
    </ligand>
</feature>
<feature type="site" description="Transition state stabilizer" evidence="1">
    <location>
        <position position="37"/>
    </location>
</feature>
<feature type="site" description="Transition state stabilizer" evidence="1">
    <location>
        <position position="256"/>
    </location>
</feature>
<name>ARGB_BURMA</name>
<comment type="function">
    <text evidence="1">Catalyzes the ATP-dependent phosphorylation of N-acetyl-L-glutamate.</text>
</comment>
<comment type="catalytic activity">
    <reaction evidence="1">
        <text>N-acetyl-L-glutamate + ATP = N-acetyl-L-glutamyl 5-phosphate + ADP</text>
        <dbReference type="Rhea" id="RHEA:14629"/>
        <dbReference type="ChEBI" id="CHEBI:30616"/>
        <dbReference type="ChEBI" id="CHEBI:44337"/>
        <dbReference type="ChEBI" id="CHEBI:57936"/>
        <dbReference type="ChEBI" id="CHEBI:456216"/>
        <dbReference type="EC" id="2.7.2.8"/>
    </reaction>
</comment>
<comment type="pathway">
    <text evidence="1">Amino-acid biosynthesis; L-arginine biosynthesis; N(2)-acetyl-L-ornithine from L-glutamate: step 2/4.</text>
</comment>
<comment type="subcellular location">
    <subcellularLocation>
        <location evidence="1">Cytoplasm</location>
    </subcellularLocation>
</comment>
<comment type="similarity">
    <text evidence="1">Belongs to the acetylglutamate kinase family. ArgB subfamily.</text>
</comment>
<protein>
    <recommendedName>
        <fullName evidence="1">Acetylglutamate kinase</fullName>
        <ecNumber evidence="1">2.7.2.8</ecNumber>
    </recommendedName>
    <alternativeName>
        <fullName evidence="1">N-acetyl-L-glutamate 5-phosphotransferase</fullName>
    </alternativeName>
    <alternativeName>
        <fullName evidence="1">NAG kinase</fullName>
        <shortName evidence="1">NAGK</shortName>
    </alternativeName>
</protein>
<keyword id="KW-0028">Amino-acid biosynthesis</keyword>
<keyword id="KW-0055">Arginine biosynthesis</keyword>
<keyword id="KW-0067">ATP-binding</keyword>
<keyword id="KW-0963">Cytoplasm</keyword>
<keyword id="KW-0418">Kinase</keyword>
<keyword id="KW-0547">Nucleotide-binding</keyword>
<keyword id="KW-1185">Reference proteome</keyword>
<keyword id="KW-0808">Transferase</keyword>
<gene>
    <name evidence="1" type="primary">argB</name>
    <name type="ordered locus">BMA3249</name>
</gene>
<reference key="1">
    <citation type="journal article" date="2004" name="Proc. Natl. Acad. Sci. U.S.A.">
        <title>Structural flexibility in the Burkholderia mallei genome.</title>
        <authorList>
            <person name="Nierman W.C."/>
            <person name="DeShazer D."/>
            <person name="Kim H.S."/>
            <person name="Tettelin H."/>
            <person name="Nelson K.E."/>
            <person name="Feldblyum T.V."/>
            <person name="Ulrich R.L."/>
            <person name="Ronning C.M."/>
            <person name="Brinkac L.M."/>
            <person name="Daugherty S.C."/>
            <person name="Davidsen T.D."/>
            <person name="DeBoy R.T."/>
            <person name="Dimitrov G."/>
            <person name="Dodson R.J."/>
            <person name="Durkin A.S."/>
            <person name="Gwinn M.L."/>
            <person name="Haft D.H."/>
            <person name="Khouri H.M."/>
            <person name="Kolonay J.F."/>
            <person name="Madupu R."/>
            <person name="Mohammoud Y."/>
            <person name="Nelson W.C."/>
            <person name="Radune D."/>
            <person name="Romero C.M."/>
            <person name="Sarria S."/>
            <person name="Selengut J."/>
            <person name="Shamblin C."/>
            <person name="Sullivan S.A."/>
            <person name="White O."/>
            <person name="Yu Y."/>
            <person name="Zafar N."/>
            <person name="Zhou L."/>
            <person name="Fraser C.M."/>
        </authorList>
    </citation>
    <scope>NUCLEOTIDE SEQUENCE [LARGE SCALE GENOMIC DNA]</scope>
    <source>
        <strain>ATCC 23344</strain>
    </source>
</reference>
<accession>Q62F04</accession>
<dbReference type="EC" id="2.7.2.8" evidence="1"/>
<dbReference type="EMBL" id="CP000010">
    <property type="protein sequence ID" value="AAU48397.1"/>
    <property type="molecule type" value="Genomic_DNA"/>
</dbReference>
<dbReference type="RefSeq" id="WP_004200214.1">
    <property type="nucleotide sequence ID" value="NC_006348.1"/>
</dbReference>
<dbReference type="RefSeq" id="YP_104723.1">
    <property type="nucleotide sequence ID" value="NC_006348.1"/>
</dbReference>
<dbReference type="SMR" id="Q62F04"/>
<dbReference type="GeneID" id="93058708"/>
<dbReference type="KEGG" id="bma:BMA3249"/>
<dbReference type="PATRIC" id="fig|243160.12.peg.3329"/>
<dbReference type="eggNOG" id="COG0548">
    <property type="taxonomic scope" value="Bacteria"/>
</dbReference>
<dbReference type="HOGENOM" id="CLU_053680_0_0_4"/>
<dbReference type="UniPathway" id="UPA00068">
    <property type="reaction ID" value="UER00107"/>
</dbReference>
<dbReference type="Proteomes" id="UP000006693">
    <property type="component" value="Chromosome 1"/>
</dbReference>
<dbReference type="GO" id="GO:0005737">
    <property type="term" value="C:cytoplasm"/>
    <property type="evidence" value="ECO:0007669"/>
    <property type="project" value="UniProtKB-SubCell"/>
</dbReference>
<dbReference type="GO" id="GO:0003991">
    <property type="term" value="F:acetylglutamate kinase activity"/>
    <property type="evidence" value="ECO:0007669"/>
    <property type="project" value="UniProtKB-UniRule"/>
</dbReference>
<dbReference type="GO" id="GO:0005524">
    <property type="term" value="F:ATP binding"/>
    <property type="evidence" value="ECO:0007669"/>
    <property type="project" value="UniProtKB-UniRule"/>
</dbReference>
<dbReference type="GO" id="GO:0042450">
    <property type="term" value="P:arginine biosynthetic process via ornithine"/>
    <property type="evidence" value="ECO:0007669"/>
    <property type="project" value="UniProtKB-UniRule"/>
</dbReference>
<dbReference type="GO" id="GO:0006526">
    <property type="term" value="P:L-arginine biosynthetic process"/>
    <property type="evidence" value="ECO:0007669"/>
    <property type="project" value="UniProtKB-UniPathway"/>
</dbReference>
<dbReference type="CDD" id="cd04250">
    <property type="entry name" value="AAK_NAGK-C"/>
    <property type="match status" value="1"/>
</dbReference>
<dbReference type="FunFam" id="3.40.1160.10:FF:000004">
    <property type="entry name" value="Acetylglutamate kinase"/>
    <property type="match status" value="1"/>
</dbReference>
<dbReference type="Gene3D" id="3.40.1160.10">
    <property type="entry name" value="Acetylglutamate kinase-like"/>
    <property type="match status" value="1"/>
</dbReference>
<dbReference type="HAMAP" id="MF_00082">
    <property type="entry name" value="ArgB"/>
    <property type="match status" value="1"/>
</dbReference>
<dbReference type="InterPro" id="IPR036393">
    <property type="entry name" value="AceGlu_kinase-like_sf"/>
</dbReference>
<dbReference type="InterPro" id="IPR004662">
    <property type="entry name" value="AcgluKinase_fam"/>
</dbReference>
<dbReference type="InterPro" id="IPR037528">
    <property type="entry name" value="ArgB"/>
</dbReference>
<dbReference type="InterPro" id="IPR001048">
    <property type="entry name" value="Asp/Glu/Uridylate_kinase"/>
</dbReference>
<dbReference type="InterPro" id="IPR041727">
    <property type="entry name" value="NAGK-C"/>
</dbReference>
<dbReference type="NCBIfam" id="TIGR00761">
    <property type="entry name" value="argB"/>
    <property type="match status" value="1"/>
</dbReference>
<dbReference type="PANTHER" id="PTHR23342">
    <property type="entry name" value="N-ACETYLGLUTAMATE SYNTHASE"/>
    <property type="match status" value="1"/>
</dbReference>
<dbReference type="PANTHER" id="PTHR23342:SF0">
    <property type="entry name" value="N-ACETYLGLUTAMATE SYNTHASE, MITOCHONDRIAL"/>
    <property type="match status" value="1"/>
</dbReference>
<dbReference type="Pfam" id="PF00696">
    <property type="entry name" value="AA_kinase"/>
    <property type="match status" value="1"/>
</dbReference>
<dbReference type="PIRSF" id="PIRSF000728">
    <property type="entry name" value="NAGK"/>
    <property type="match status" value="1"/>
</dbReference>
<dbReference type="SUPFAM" id="SSF53633">
    <property type="entry name" value="Carbamate kinase-like"/>
    <property type="match status" value="1"/>
</dbReference>
<evidence type="ECO:0000255" key="1">
    <source>
        <dbReference type="HAMAP-Rule" id="MF_00082"/>
    </source>
</evidence>
<organism>
    <name type="scientific">Burkholderia mallei (strain ATCC 23344)</name>
    <dbReference type="NCBI Taxonomy" id="243160"/>
    <lineage>
        <taxon>Bacteria</taxon>
        <taxon>Pseudomonadati</taxon>
        <taxon>Pseudomonadota</taxon>
        <taxon>Betaproteobacteria</taxon>
        <taxon>Burkholderiales</taxon>
        <taxon>Burkholderiaceae</taxon>
        <taxon>Burkholderia</taxon>
        <taxon>pseudomallei group</taxon>
    </lineage>
</organism>